<evidence type="ECO:0000255" key="1">
    <source>
        <dbReference type="HAMAP-Rule" id="MF_00123"/>
    </source>
</evidence>
<reference key="1">
    <citation type="submission" date="2006-05" db="EMBL/GenBank/DDBJ databases">
        <title>Complete sequence of chromosome of Silicibacter sp. TM1040.</title>
        <authorList>
            <consortium name="US DOE Joint Genome Institute"/>
            <person name="Copeland A."/>
            <person name="Lucas S."/>
            <person name="Lapidus A."/>
            <person name="Barry K."/>
            <person name="Detter J.C."/>
            <person name="Glavina del Rio T."/>
            <person name="Hammon N."/>
            <person name="Israni S."/>
            <person name="Dalin E."/>
            <person name="Tice H."/>
            <person name="Pitluck S."/>
            <person name="Brettin T."/>
            <person name="Bruce D."/>
            <person name="Han C."/>
            <person name="Tapia R."/>
            <person name="Goodwin L."/>
            <person name="Thompson L.S."/>
            <person name="Gilna P."/>
            <person name="Schmutz J."/>
            <person name="Larimer F."/>
            <person name="Land M."/>
            <person name="Hauser L."/>
            <person name="Kyrpides N."/>
            <person name="Kim E."/>
            <person name="Belas R."/>
            <person name="Moran M.A."/>
            <person name="Buchan A."/>
            <person name="Gonzalez J.M."/>
            <person name="Schell M.A."/>
            <person name="Sun F."/>
            <person name="Richardson P."/>
        </authorList>
    </citation>
    <scope>NUCLEOTIDE SEQUENCE [LARGE SCALE GENOMIC DNA]</scope>
    <source>
        <strain>TM1040</strain>
    </source>
</reference>
<sequence length="580" mass="63653">MNLFTDIRTLVIDSLAAMTAEGALPEGLDFANVTVEPPRDAAHGDMATNAAMVLAKPAKMKPRDIAEALAAKLAQDKRITSAEVAGPGFLNLRLDLSVWQDVLGKALNAEEAYGRSDMGQGKRVNVEYVSANPTGPLHVGHTRGAVFGDALASLLDFAGYDVTREYYINDGGAQVDVLARSAYLRYLEAHGQSVEFPDGTYPGEYLKDVGAALKDKFGDRFVGQPEETWLEEVRNFATDMMMDLIREDLALLGVEMDVFYSEKSLYGTGRIEAALESLDAKGLIYEGVLEPPKGKKPDDWEPRIQTLFKSTEHGDDVDRPVKKSDGAWTYFAPDIAYHYDKVSRGFDMLIDIFGADHGGYVKRMKAAVSALSDGKVPLDVKLCQLVKLFKDGQEFKMSKRAGTFVTLRDVVDAVGADVTRFMLLTRKNDQGFDFDLDKALEQSKDNPVFYVQYANARIHSTLRKAREAGIACDEATLSGADLSLLTHDAQLAVARKVAEWPRQVEIAARTNEPHRIAFFLYELASDLHGLYHLGKSEESLRFVNESSELATHANLALARAVSIVISAGLGILGVKPAQEM</sequence>
<gene>
    <name evidence="1" type="primary">argS</name>
    <name type="ordered locus">TM1040_0903</name>
</gene>
<comment type="catalytic activity">
    <reaction evidence="1">
        <text>tRNA(Arg) + L-arginine + ATP = L-arginyl-tRNA(Arg) + AMP + diphosphate</text>
        <dbReference type="Rhea" id="RHEA:20301"/>
        <dbReference type="Rhea" id="RHEA-COMP:9658"/>
        <dbReference type="Rhea" id="RHEA-COMP:9673"/>
        <dbReference type="ChEBI" id="CHEBI:30616"/>
        <dbReference type="ChEBI" id="CHEBI:32682"/>
        <dbReference type="ChEBI" id="CHEBI:33019"/>
        <dbReference type="ChEBI" id="CHEBI:78442"/>
        <dbReference type="ChEBI" id="CHEBI:78513"/>
        <dbReference type="ChEBI" id="CHEBI:456215"/>
        <dbReference type="EC" id="6.1.1.19"/>
    </reaction>
</comment>
<comment type="subunit">
    <text evidence="1">Monomer.</text>
</comment>
<comment type="subcellular location">
    <subcellularLocation>
        <location evidence="1">Cytoplasm</location>
    </subcellularLocation>
</comment>
<comment type="similarity">
    <text evidence="1">Belongs to the class-I aminoacyl-tRNA synthetase family.</text>
</comment>
<name>SYR_RUEST</name>
<proteinExistence type="inferred from homology"/>
<dbReference type="EC" id="6.1.1.19" evidence="1"/>
<dbReference type="EMBL" id="CP000377">
    <property type="protein sequence ID" value="ABF63636.1"/>
    <property type="molecule type" value="Genomic_DNA"/>
</dbReference>
<dbReference type="RefSeq" id="WP_011538248.1">
    <property type="nucleotide sequence ID" value="NC_008044.1"/>
</dbReference>
<dbReference type="SMR" id="Q1GI80"/>
<dbReference type="STRING" id="292414.TM1040_0903"/>
<dbReference type="KEGG" id="sit:TM1040_0903"/>
<dbReference type="eggNOG" id="COG0018">
    <property type="taxonomic scope" value="Bacteria"/>
</dbReference>
<dbReference type="HOGENOM" id="CLU_006406_0_1_5"/>
<dbReference type="OrthoDB" id="9803211at2"/>
<dbReference type="Proteomes" id="UP000000636">
    <property type="component" value="Chromosome"/>
</dbReference>
<dbReference type="GO" id="GO:0005737">
    <property type="term" value="C:cytoplasm"/>
    <property type="evidence" value="ECO:0007669"/>
    <property type="project" value="UniProtKB-SubCell"/>
</dbReference>
<dbReference type="GO" id="GO:0004814">
    <property type="term" value="F:arginine-tRNA ligase activity"/>
    <property type="evidence" value="ECO:0007669"/>
    <property type="project" value="UniProtKB-UniRule"/>
</dbReference>
<dbReference type="GO" id="GO:0005524">
    <property type="term" value="F:ATP binding"/>
    <property type="evidence" value="ECO:0007669"/>
    <property type="project" value="UniProtKB-UniRule"/>
</dbReference>
<dbReference type="GO" id="GO:0006420">
    <property type="term" value="P:arginyl-tRNA aminoacylation"/>
    <property type="evidence" value="ECO:0007669"/>
    <property type="project" value="UniProtKB-UniRule"/>
</dbReference>
<dbReference type="CDD" id="cd00671">
    <property type="entry name" value="ArgRS_core"/>
    <property type="match status" value="1"/>
</dbReference>
<dbReference type="FunFam" id="3.30.1360.70:FF:000003">
    <property type="entry name" value="Arginine--tRNA ligase"/>
    <property type="match status" value="1"/>
</dbReference>
<dbReference type="FunFam" id="3.40.50.620:FF:000062">
    <property type="entry name" value="Arginine--tRNA ligase"/>
    <property type="match status" value="1"/>
</dbReference>
<dbReference type="Gene3D" id="3.30.1360.70">
    <property type="entry name" value="Arginyl tRNA synthetase N-terminal domain"/>
    <property type="match status" value="1"/>
</dbReference>
<dbReference type="Gene3D" id="3.40.50.620">
    <property type="entry name" value="HUPs"/>
    <property type="match status" value="1"/>
</dbReference>
<dbReference type="Gene3D" id="1.10.730.10">
    <property type="entry name" value="Isoleucyl-tRNA Synthetase, Domain 1"/>
    <property type="match status" value="1"/>
</dbReference>
<dbReference type="HAMAP" id="MF_00123">
    <property type="entry name" value="Arg_tRNA_synth"/>
    <property type="match status" value="1"/>
</dbReference>
<dbReference type="InterPro" id="IPR001412">
    <property type="entry name" value="aa-tRNA-synth_I_CS"/>
</dbReference>
<dbReference type="InterPro" id="IPR001278">
    <property type="entry name" value="Arg-tRNA-ligase"/>
</dbReference>
<dbReference type="InterPro" id="IPR005148">
    <property type="entry name" value="Arg-tRNA-synth_N"/>
</dbReference>
<dbReference type="InterPro" id="IPR036695">
    <property type="entry name" value="Arg-tRNA-synth_N_sf"/>
</dbReference>
<dbReference type="InterPro" id="IPR035684">
    <property type="entry name" value="ArgRS_core"/>
</dbReference>
<dbReference type="InterPro" id="IPR008909">
    <property type="entry name" value="DALR_anticod-bd"/>
</dbReference>
<dbReference type="InterPro" id="IPR014729">
    <property type="entry name" value="Rossmann-like_a/b/a_fold"/>
</dbReference>
<dbReference type="InterPro" id="IPR009080">
    <property type="entry name" value="tRNAsynth_Ia_anticodon-bd"/>
</dbReference>
<dbReference type="NCBIfam" id="TIGR00456">
    <property type="entry name" value="argS"/>
    <property type="match status" value="1"/>
</dbReference>
<dbReference type="PANTHER" id="PTHR11956:SF5">
    <property type="entry name" value="ARGININE--TRNA LIGASE, CYTOPLASMIC"/>
    <property type="match status" value="1"/>
</dbReference>
<dbReference type="PANTHER" id="PTHR11956">
    <property type="entry name" value="ARGINYL-TRNA SYNTHETASE"/>
    <property type="match status" value="1"/>
</dbReference>
<dbReference type="Pfam" id="PF03485">
    <property type="entry name" value="Arg_tRNA_synt_N"/>
    <property type="match status" value="1"/>
</dbReference>
<dbReference type="Pfam" id="PF05746">
    <property type="entry name" value="DALR_1"/>
    <property type="match status" value="1"/>
</dbReference>
<dbReference type="Pfam" id="PF00750">
    <property type="entry name" value="tRNA-synt_1d"/>
    <property type="match status" value="1"/>
</dbReference>
<dbReference type="PRINTS" id="PR01038">
    <property type="entry name" value="TRNASYNTHARG"/>
</dbReference>
<dbReference type="SMART" id="SM01016">
    <property type="entry name" value="Arg_tRNA_synt_N"/>
    <property type="match status" value="1"/>
</dbReference>
<dbReference type="SMART" id="SM00836">
    <property type="entry name" value="DALR_1"/>
    <property type="match status" value="1"/>
</dbReference>
<dbReference type="SUPFAM" id="SSF47323">
    <property type="entry name" value="Anticodon-binding domain of a subclass of class I aminoacyl-tRNA synthetases"/>
    <property type="match status" value="1"/>
</dbReference>
<dbReference type="SUPFAM" id="SSF55190">
    <property type="entry name" value="Arginyl-tRNA synthetase (ArgRS), N-terminal 'additional' domain"/>
    <property type="match status" value="1"/>
</dbReference>
<dbReference type="SUPFAM" id="SSF52374">
    <property type="entry name" value="Nucleotidylyl transferase"/>
    <property type="match status" value="1"/>
</dbReference>
<dbReference type="PROSITE" id="PS00178">
    <property type="entry name" value="AA_TRNA_LIGASE_I"/>
    <property type="match status" value="1"/>
</dbReference>
<feature type="chain" id="PRO_1000018123" description="Arginine--tRNA ligase">
    <location>
        <begin position="1"/>
        <end position="580"/>
    </location>
</feature>
<feature type="short sequence motif" description="'HIGH' region">
    <location>
        <begin position="131"/>
        <end position="141"/>
    </location>
</feature>
<organism>
    <name type="scientific">Ruegeria sp. (strain TM1040)</name>
    <name type="common">Silicibacter sp.</name>
    <dbReference type="NCBI Taxonomy" id="292414"/>
    <lineage>
        <taxon>Bacteria</taxon>
        <taxon>Pseudomonadati</taxon>
        <taxon>Pseudomonadota</taxon>
        <taxon>Alphaproteobacteria</taxon>
        <taxon>Rhodobacterales</taxon>
        <taxon>Roseobacteraceae</taxon>
        <taxon>Ruegeria</taxon>
    </lineage>
</organism>
<protein>
    <recommendedName>
        <fullName evidence="1">Arginine--tRNA ligase</fullName>
        <ecNumber evidence="1">6.1.1.19</ecNumber>
    </recommendedName>
    <alternativeName>
        <fullName evidence="1">Arginyl-tRNA synthetase</fullName>
        <shortName evidence="1">ArgRS</shortName>
    </alternativeName>
</protein>
<keyword id="KW-0030">Aminoacyl-tRNA synthetase</keyword>
<keyword id="KW-0067">ATP-binding</keyword>
<keyword id="KW-0963">Cytoplasm</keyword>
<keyword id="KW-0436">Ligase</keyword>
<keyword id="KW-0547">Nucleotide-binding</keyword>
<keyword id="KW-0648">Protein biosynthesis</keyword>
<keyword id="KW-1185">Reference proteome</keyword>
<accession>Q1GI80</accession>